<keyword id="KW-0067">ATP-binding</keyword>
<keyword id="KW-0520">NAD</keyword>
<keyword id="KW-0547">Nucleotide-binding</keyword>
<keyword id="KW-0548">Nucleotidyltransferase</keyword>
<keyword id="KW-0662">Pyridine nucleotide biosynthesis</keyword>
<keyword id="KW-0808">Transferase</keyword>
<organism>
    <name type="scientific">Staphylococcus haemolyticus (strain JCSC1435)</name>
    <dbReference type="NCBI Taxonomy" id="279808"/>
    <lineage>
        <taxon>Bacteria</taxon>
        <taxon>Bacillati</taxon>
        <taxon>Bacillota</taxon>
        <taxon>Bacilli</taxon>
        <taxon>Bacillales</taxon>
        <taxon>Staphylococcaceae</taxon>
        <taxon>Staphylococcus</taxon>
    </lineage>
</organism>
<accession>Q4L6U5</accession>
<dbReference type="EC" id="2.7.7.18" evidence="1"/>
<dbReference type="EMBL" id="AP006716">
    <property type="protein sequence ID" value="BAE04630.1"/>
    <property type="molecule type" value="Genomic_DNA"/>
</dbReference>
<dbReference type="SMR" id="Q4L6U5"/>
<dbReference type="KEGG" id="sha:SH1321"/>
<dbReference type="eggNOG" id="COG1057">
    <property type="taxonomic scope" value="Bacteria"/>
</dbReference>
<dbReference type="HOGENOM" id="CLU_069765_3_1_9"/>
<dbReference type="OrthoDB" id="5295945at2"/>
<dbReference type="UniPathway" id="UPA00253">
    <property type="reaction ID" value="UER00332"/>
</dbReference>
<dbReference type="Proteomes" id="UP000000543">
    <property type="component" value="Chromosome"/>
</dbReference>
<dbReference type="GO" id="GO:0005524">
    <property type="term" value="F:ATP binding"/>
    <property type="evidence" value="ECO:0007669"/>
    <property type="project" value="UniProtKB-KW"/>
</dbReference>
<dbReference type="GO" id="GO:0004515">
    <property type="term" value="F:nicotinate-nucleotide adenylyltransferase activity"/>
    <property type="evidence" value="ECO:0007669"/>
    <property type="project" value="UniProtKB-UniRule"/>
</dbReference>
<dbReference type="GO" id="GO:0009435">
    <property type="term" value="P:NAD biosynthetic process"/>
    <property type="evidence" value="ECO:0007669"/>
    <property type="project" value="UniProtKB-UniRule"/>
</dbReference>
<dbReference type="CDD" id="cd02165">
    <property type="entry name" value="NMNAT"/>
    <property type="match status" value="1"/>
</dbReference>
<dbReference type="Gene3D" id="3.40.50.620">
    <property type="entry name" value="HUPs"/>
    <property type="match status" value="1"/>
</dbReference>
<dbReference type="HAMAP" id="MF_00244">
    <property type="entry name" value="NaMN_adenylyltr"/>
    <property type="match status" value="1"/>
</dbReference>
<dbReference type="InterPro" id="IPR004821">
    <property type="entry name" value="Cyt_trans-like"/>
</dbReference>
<dbReference type="InterPro" id="IPR005248">
    <property type="entry name" value="NadD/NMNAT"/>
</dbReference>
<dbReference type="InterPro" id="IPR014729">
    <property type="entry name" value="Rossmann-like_a/b/a_fold"/>
</dbReference>
<dbReference type="NCBIfam" id="TIGR00482">
    <property type="entry name" value="nicotinate (nicotinamide) nucleotide adenylyltransferase"/>
    <property type="match status" value="1"/>
</dbReference>
<dbReference type="NCBIfam" id="NF000840">
    <property type="entry name" value="PRK00071.1-3"/>
    <property type="match status" value="1"/>
</dbReference>
<dbReference type="NCBIfam" id="NF000841">
    <property type="entry name" value="PRK00071.1-4"/>
    <property type="match status" value="1"/>
</dbReference>
<dbReference type="PANTHER" id="PTHR39321">
    <property type="entry name" value="NICOTINATE-NUCLEOTIDE ADENYLYLTRANSFERASE-RELATED"/>
    <property type="match status" value="1"/>
</dbReference>
<dbReference type="PANTHER" id="PTHR39321:SF3">
    <property type="entry name" value="PHOSPHOPANTETHEINE ADENYLYLTRANSFERASE"/>
    <property type="match status" value="1"/>
</dbReference>
<dbReference type="Pfam" id="PF01467">
    <property type="entry name" value="CTP_transf_like"/>
    <property type="match status" value="1"/>
</dbReference>
<dbReference type="SUPFAM" id="SSF52374">
    <property type="entry name" value="Nucleotidylyl transferase"/>
    <property type="match status" value="1"/>
</dbReference>
<sequence>MMNKKAIVLYGGQFNPIHTAHLLVANEVYHQLKPDKFYFLPSYMAPLKTHDDYLDAKYRIKMIQLAIEELGFGEICQIELERKGQSYTYETLKDIVNNEKDADIYFIIGTDQYKQLDKWYKIEKLKQLITFVIVNRDVNYQEVDESMISVNIPRMDISSSLIRNRVKNKQPINILVPRSIHDYIREEGFYEN</sequence>
<evidence type="ECO:0000255" key="1">
    <source>
        <dbReference type="HAMAP-Rule" id="MF_00244"/>
    </source>
</evidence>
<reference key="1">
    <citation type="journal article" date="2005" name="J. Bacteriol.">
        <title>Whole-genome sequencing of Staphylococcus haemolyticus uncovers the extreme plasticity of its genome and the evolution of human-colonizing staphylococcal species.</title>
        <authorList>
            <person name="Takeuchi F."/>
            <person name="Watanabe S."/>
            <person name="Baba T."/>
            <person name="Yuzawa H."/>
            <person name="Ito T."/>
            <person name="Morimoto Y."/>
            <person name="Kuroda M."/>
            <person name="Cui L."/>
            <person name="Takahashi M."/>
            <person name="Ankai A."/>
            <person name="Baba S."/>
            <person name="Fukui S."/>
            <person name="Lee J.C."/>
            <person name="Hiramatsu K."/>
        </authorList>
    </citation>
    <scope>NUCLEOTIDE SEQUENCE [LARGE SCALE GENOMIC DNA]</scope>
    <source>
        <strain>JCSC1435</strain>
    </source>
</reference>
<gene>
    <name evidence="1" type="primary">nadD</name>
    <name type="ordered locus">SH1321</name>
</gene>
<comment type="function">
    <text evidence="1">Catalyzes the reversible adenylation of nicotinate mononucleotide (NaMN) to nicotinic acid adenine dinucleotide (NaAD).</text>
</comment>
<comment type="catalytic activity">
    <reaction evidence="1">
        <text>nicotinate beta-D-ribonucleotide + ATP + H(+) = deamido-NAD(+) + diphosphate</text>
        <dbReference type="Rhea" id="RHEA:22860"/>
        <dbReference type="ChEBI" id="CHEBI:15378"/>
        <dbReference type="ChEBI" id="CHEBI:30616"/>
        <dbReference type="ChEBI" id="CHEBI:33019"/>
        <dbReference type="ChEBI" id="CHEBI:57502"/>
        <dbReference type="ChEBI" id="CHEBI:58437"/>
        <dbReference type="EC" id="2.7.7.18"/>
    </reaction>
</comment>
<comment type="pathway">
    <text evidence="1">Cofactor biosynthesis; NAD(+) biosynthesis; deamido-NAD(+) from nicotinate D-ribonucleotide: step 1/1.</text>
</comment>
<comment type="similarity">
    <text evidence="1">Belongs to the NadD family.</text>
</comment>
<proteinExistence type="inferred from homology"/>
<protein>
    <recommendedName>
        <fullName evidence="1">Probable nicotinate-nucleotide adenylyltransferase</fullName>
        <ecNumber evidence="1">2.7.7.18</ecNumber>
    </recommendedName>
    <alternativeName>
        <fullName evidence="1">Deamido-NAD(+) diphosphorylase</fullName>
    </alternativeName>
    <alternativeName>
        <fullName evidence="1">Deamido-NAD(+) pyrophosphorylase</fullName>
    </alternativeName>
    <alternativeName>
        <fullName evidence="1">Nicotinate mononucleotide adenylyltransferase</fullName>
        <shortName evidence="1">NaMN adenylyltransferase</shortName>
    </alternativeName>
</protein>
<name>NADD_STAHJ</name>
<feature type="chain" id="PRO_0000336739" description="Probable nicotinate-nucleotide adenylyltransferase">
    <location>
        <begin position="1"/>
        <end position="192"/>
    </location>
</feature>